<accession>Q5QYY0</accession>
<evidence type="ECO:0000255" key="1">
    <source>
        <dbReference type="HAMAP-Rule" id="MF_00405"/>
    </source>
</evidence>
<feature type="chain" id="PRO_0000091600" description="3-hydroxydecanoyl-[acyl-carrier-protein] dehydratase">
    <location>
        <begin position="1"/>
        <end position="170"/>
    </location>
</feature>
<feature type="active site" evidence="1">
    <location>
        <position position="69"/>
    </location>
</feature>
<proteinExistence type="inferred from homology"/>
<keyword id="KW-0963">Cytoplasm</keyword>
<keyword id="KW-0275">Fatty acid biosynthesis</keyword>
<keyword id="KW-0276">Fatty acid metabolism</keyword>
<keyword id="KW-0413">Isomerase</keyword>
<keyword id="KW-0444">Lipid biosynthesis</keyword>
<keyword id="KW-0443">Lipid metabolism</keyword>
<keyword id="KW-0456">Lyase</keyword>
<keyword id="KW-1185">Reference proteome</keyword>
<reference key="1">
    <citation type="journal article" date="2004" name="Proc. Natl. Acad. Sci. U.S.A.">
        <title>Genome sequence of the deep-sea gamma-proteobacterium Idiomarina loihiensis reveals amino acid fermentation as a source of carbon and energy.</title>
        <authorList>
            <person name="Hou S."/>
            <person name="Saw J.H."/>
            <person name="Lee K.S."/>
            <person name="Freitas T.A."/>
            <person name="Belisle C."/>
            <person name="Kawarabayasi Y."/>
            <person name="Donachie S.P."/>
            <person name="Pikina A."/>
            <person name="Galperin M.Y."/>
            <person name="Koonin E.V."/>
            <person name="Makarova K.S."/>
            <person name="Omelchenko M.V."/>
            <person name="Sorokin A."/>
            <person name="Wolf Y.I."/>
            <person name="Li Q.X."/>
            <person name="Keum Y.S."/>
            <person name="Campbell S."/>
            <person name="Denery J."/>
            <person name="Aizawa S."/>
            <person name="Shibata S."/>
            <person name="Malahoff A."/>
            <person name="Alam M."/>
        </authorList>
    </citation>
    <scope>NUCLEOTIDE SEQUENCE [LARGE SCALE GENOMIC DNA]</scope>
    <source>
        <strain>ATCC BAA-735 / DSM 15497 / L2-TR</strain>
    </source>
</reference>
<protein>
    <recommendedName>
        <fullName evidence="1">3-hydroxydecanoyl-[acyl-carrier-protein] dehydratase</fullName>
        <ecNumber evidence="1">4.2.1.59</ecNumber>
    </recommendedName>
    <alternativeName>
        <fullName evidence="1">3-hydroxyacyl-[acyl-carrier-protein] dehydratase FabA</fullName>
    </alternativeName>
    <alternativeName>
        <fullName evidence="1">Beta-hydroxydecanoyl thioester dehydrase</fullName>
    </alternativeName>
    <alternativeName>
        <fullName evidence="1">Trans-2-decenoyl-[acyl-carrier-protein] isomerase</fullName>
        <ecNumber evidence="1">5.3.3.14</ecNumber>
    </alternativeName>
</protein>
<organism>
    <name type="scientific">Idiomarina loihiensis (strain ATCC BAA-735 / DSM 15497 / L2-TR)</name>
    <dbReference type="NCBI Taxonomy" id="283942"/>
    <lineage>
        <taxon>Bacteria</taxon>
        <taxon>Pseudomonadati</taxon>
        <taxon>Pseudomonadota</taxon>
        <taxon>Gammaproteobacteria</taxon>
        <taxon>Alteromonadales</taxon>
        <taxon>Idiomarinaceae</taxon>
        <taxon>Idiomarina</taxon>
    </lineage>
</organism>
<dbReference type="EC" id="4.2.1.59" evidence="1"/>
<dbReference type="EC" id="5.3.3.14" evidence="1"/>
<dbReference type="EMBL" id="AE017340">
    <property type="protein sequence ID" value="AAV82127.1"/>
    <property type="molecule type" value="Genomic_DNA"/>
</dbReference>
<dbReference type="RefSeq" id="WP_011234533.1">
    <property type="nucleotide sequence ID" value="NC_006512.1"/>
</dbReference>
<dbReference type="SMR" id="Q5QYY0"/>
<dbReference type="STRING" id="283942.IL1287"/>
<dbReference type="GeneID" id="41336463"/>
<dbReference type="KEGG" id="ilo:IL1287"/>
<dbReference type="eggNOG" id="COG0764">
    <property type="taxonomic scope" value="Bacteria"/>
</dbReference>
<dbReference type="HOGENOM" id="CLU_097925_0_0_6"/>
<dbReference type="OrthoDB" id="9786735at2"/>
<dbReference type="UniPathway" id="UPA00094"/>
<dbReference type="Proteomes" id="UP000001171">
    <property type="component" value="Chromosome"/>
</dbReference>
<dbReference type="GO" id="GO:0005737">
    <property type="term" value="C:cytoplasm"/>
    <property type="evidence" value="ECO:0007669"/>
    <property type="project" value="UniProtKB-SubCell"/>
</dbReference>
<dbReference type="GO" id="GO:0019171">
    <property type="term" value="F:(3R)-hydroxyacyl-[acyl-carrier-protein] dehydratase activity"/>
    <property type="evidence" value="ECO:0007669"/>
    <property type="project" value="UniProtKB-UniRule"/>
</dbReference>
<dbReference type="GO" id="GO:0034017">
    <property type="term" value="F:trans-2-decenoyl-acyl-carrier-protein isomerase activity"/>
    <property type="evidence" value="ECO:0007669"/>
    <property type="project" value="UniProtKB-UniRule"/>
</dbReference>
<dbReference type="GO" id="GO:0006636">
    <property type="term" value="P:unsaturated fatty acid biosynthetic process"/>
    <property type="evidence" value="ECO:0007669"/>
    <property type="project" value="UniProtKB-UniRule"/>
</dbReference>
<dbReference type="CDD" id="cd01287">
    <property type="entry name" value="FabA"/>
    <property type="match status" value="1"/>
</dbReference>
<dbReference type="Gene3D" id="3.10.129.10">
    <property type="entry name" value="Hotdog Thioesterase"/>
    <property type="match status" value="1"/>
</dbReference>
<dbReference type="HAMAP" id="MF_00405">
    <property type="entry name" value="FabA"/>
    <property type="match status" value="1"/>
</dbReference>
<dbReference type="InterPro" id="IPR010083">
    <property type="entry name" value="FabA"/>
</dbReference>
<dbReference type="InterPro" id="IPR013114">
    <property type="entry name" value="FabA_FabZ"/>
</dbReference>
<dbReference type="InterPro" id="IPR029069">
    <property type="entry name" value="HotDog_dom_sf"/>
</dbReference>
<dbReference type="NCBIfam" id="TIGR01749">
    <property type="entry name" value="fabA"/>
    <property type="match status" value="1"/>
</dbReference>
<dbReference type="NCBIfam" id="NF003509">
    <property type="entry name" value="PRK05174.1"/>
    <property type="match status" value="1"/>
</dbReference>
<dbReference type="PANTHER" id="PTHR30272">
    <property type="entry name" value="3-HYDROXYACYL-[ACYL-CARRIER-PROTEIN] DEHYDRATASE"/>
    <property type="match status" value="1"/>
</dbReference>
<dbReference type="PANTHER" id="PTHR30272:SF8">
    <property type="entry name" value="3-HYDROXYDECANOYL-[ACYL-CARRIER-PROTEIN] DEHYDRATASE"/>
    <property type="match status" value="1"/>
</dbReference>
<dbReference type="Pfam" id="PF07977">
    <property type="entry name" value="FabA"/>
    <property type="match status" value="1"/>
</dbReference>
<dbReference type="SUPFAM" id="SSF54637">
    <property type="entry name" value="Thioesterase/thiol ester dehydrase-isomerase"/>
    <property type="match status" value="1"/>
</dbReference>
<name>FABA_IDILO</name>
<gene>
    <name evidence="1" type="primary">fabA</name>
    <name type="ordered locus">IL1287</name>
</gene>
<comment type="function">
    <text evidence="1">Necessary for the introduction of cis unsaturation into fatty acids. Catalyzes the dehydration of (3R)-3-hydroxydecanoyl-ACP to E-(2)-decenoyl-ACP and then its isomerization to Z-(3)-decenoyl-ACP. Can catalyze the dehydratase reaction for beta-hydroxyacyl-ACPs with saturated chain lengths up to 16:0, being most active on intermediate chain length.</text>
</comment>
<comment type="catalytic activity">
    <reaction evidence="1">
        <text>a (3R)-hydroxyacyl-[ACP] = a (2E)-enoyl-[ACP] + H2O</text>
        <dbReference type="Rhea" id="RHEA:13097"/>
        <dbReference type="Rhea" id="RHEA-COMP:9925"/>
        <dbReference type="Rhea" id="RHEA-COMP:9945"/>
        <dbReference type="ChEBI" id="CHEBI:15377"/>
        <dbReference type="ChEBI" id="CHEBI:78784"/>
        <dbReference type="ChEBI" id="CHEBI:78827"/>
        <dbReference type="EC" id="4.2.1.59"/>
    </reaction>
</comment>
<comment type="catalytic activity">
    <reaction evidence="1">
        <text>(3R)-hydroxydecanoyl-[ACP] = (2E)-decenoyl-[ACP] + H2O</text>
        <dbReference type="Rhea" id="RHEA:41860"/>
        <dbReference type="Rhea" id="RHEA-COMP:9638"/>
        <dbReference type="Rhea" id="RHEA-COMP:9639"/>
        <dbReference type="ChEBI" id="CHEBI:15377"/>
        <dbReference type="ChEBI" id="CHEBI:78466"/>
        <dbReference type="ChEBI" id="CHEBI:78467"/>
    </reaction>
</comment>
<comment type="catalytic activity">
    <reaction evidence="1">
        <text>(2E)-decenoyl-[ACP] = (3Z)-decenoyl-[ACP]</text>
        <dbReference type="Rhea" id="RHEA:23568"/>
        <dbReference type="Rhea" id="RHEA-COMP:9639"/>
        <dbReference type="Rhea" id="RHEA-COMP:9927"/>
        <dbReference type="ChEBI" id="CHEBI:78467"/>
        <dbReference type="ChEBI" id="CHEBI:78798"/>
        <dbReference type="EC" id="5.3.3.14"/>
    </reaction>
</comment>
<comment type="pathway">
    <text evidence="1">Lipid metabolism; fatty acid biosynthesis.</text>
</comment>
<comment type="subunit">
    <text evidence="1">Homodimer.</text>
</comment>
<comment type="subcellular location">
    <subcellularLocation>
        <location evidence="1">Cytoplasm</location>
    </subcellularLocation>
</comment>
<comment type="similarity">
    <text evidence="1">Belongs to the thioester dehydratase family. FabA subfamily.</text>
</comment>
<sequence>MNQSSFTREELLACSRGEMFGPGNSKLPAPNMLMMDRIIEINEDGGSAGKGFIHAELDINPDLWFFDCHFKGDPVMPGCLGLDAMWQLLGFHLAWSGGPGRGRALGVGEVKFTGQILPEHKKVSYFIDMTRVIKRKLFMGVGNGRVEVDGREIYTAKDLKVGLFTDTSTF</sequence>